<sequence length="170" mass="19301">MKTQRDGHSLGRWSLVLLLLGLVMPLAIIAQVLSYKEAVLRAIDGINQRSSDANLYRLLDLDPRPTMDGDPDTPKPVSFTVKETVCPRTTQQSPEDCDFKKDGLVKRCMGTVTLNQARGSFDISCDKDNKRFALLGDFFRKSKEKIGKEFKRIVQRIKDFLRNLVPRTES</sequence>
<name>CAMP_HUMAN</name>
<keyword id="KW-0002">3D-structure</keyword>
<keyword id="KW-0044">Antibiotic</keyword>
<keyword id="KW-0929">Antimicrobial</keyword>
<keyword id="KW-0165">Cleavage on pair of basic residues</keyword>
<keyword id="KW-0903">Direct protein sequencing</keyword>
<keyword id="KW-1015">Disulfide bond</keyword>
<keyword id="KW-0391">Immunity</keyword>
<keyword id="KW-0399">Innate immunity</keyword>
<keyword id="KW-0582">Pharmaceutical</keyword>
<keyword id="KW-1267">Proteomics identification</keyword>
<keyword id="KW-1185">Reference proteome</keyword>
<keyword id="KW-0964">Secreted</keyword>
<keyword id="KW-0732">Signal</keyword>
<organism>
    <name type="scientific">Homo sapiens</name>
    <name type="common">Human</name>
    <dbReference type="NCBI Taxonomy" id="9606"/>
    <lineage>
        <taxon>Eukaryota</taxon>
        <taxon>Metazoa</taxon>
        <taxon>Chordata</taxon>
        <taxon>Craniata</taxon>
        <taxon>Vertebrata</taxon>
        <taxon>Euteleostomi</taxon>
        <taxon>Mammalia</taxon>
        <taxon>Eutheria</taxon>
        <taxon>Euarchontoglires</taxon>
        <taxon>Primates</taxon>
        <taxon>Haplorrhini</taxon>
        <taxon>Catarrhini</taxon>
        <taxon>Hominidae</taxon>
        <taxon>Homo</taxon>
    </lineage>
</organism>
<evidence type="ECO:0000255" key="1"/>
<evidence type="ECO:0000269" key="2">
    <source>
    </source>
</evidence>
<evidence type="ECO:0000269" key="3">
    <source>
    </source>
</evidence>
<evidence type="ECO:0000269" key="4">
    <source>
    </source>
</evidence>
<evidence type="ECO:0000269" key="5">
    <source>
    </source>
</evidence>
<evidence type="ECO:0000269" key="6">
    <source>
    </source>
</evidence>
<evidence type="ECO:0000269" key="7">
    <source>
    </source>
</evidence>
<evidence type="ECO:0000269" key="8">
    <source>
    </source>
</evidence>
<evidence type="ECO:0000269" key="9">
    <source>
    </source>
</evidence>
<evidence type="ECO:0000269" key="10">
    <source>
    </source>
</evidence>
<evidence type="ECO:0000269" key="11">
    <source>
    </source>
</evidence>
<evidence type="ECO:0000269" key="12">
    <source>
    </source>
</evidence>
<evidence type="ECO:0000269" key="13">
    <source>
    </source>
</evidence>
<evidence type="ECO:0000269" key="14">
    <source>
    </source>
</evidence>
<evidence type="ECO:0000269" key="15">
    <source>
    </source>
</evidence>
<evidence type="ECO:0000269" key="16">
    <source>
    </source>
</evidence>
<evidence type="ECO:0000269" key="17">
    <source>
    </source>
</evidence>
<evidence type="ECO:0000269" key="18">
    <source>
    </source>
</evidence>
<evidence type="ECO:0000269" key="19">
    <source>
    </source>
</evidence>
<evidence type="ECO:0000269" key="20">
    <source>
    </source>
</evidence>
<evidence type="ECO:0000269" key="21">
    <source>
    </source>
</evidence>
<evidence type="ECO:0000303" key="22">
    <source>
    </source>
</evidence>
<evidence type="ECO:0000303" key="23">
    <source>
    </source>
</evidence>
<evidence type="ECO:0000303" key="24">
    <source>
    </source>
</evidence>
<evidence type="ECO:0000303" key="25">
    <source>
    </source>
</evidence>
<evidence type="ECO:0000303" key="26">
    <source>
    </source>
</evidence>
<evidence type="ECO:0000303" key="27">
    <source>
    </source>
</evidence>
<evidence type="ECO:0000305" key="28"/>
<evidence type="ECO:0000312" key="29">
    <source>
        <dbReference type="HGNC" id="HGNC:1472"/>
    </source>
</evidence>
<evidence type="ECO:0007744" key="30">
    <source>
        <dbReference type="PDB" id="2FBS"/>
    </source>
</evidence>
<evidence type="ECO:0007744" key="31">
    <source>
        <dbReference type="PDB" id="2FBU"/>
    </source>
</evidence>
<evidence type="ECO:0007744" key="32">
    <source>
        <dbReference type="PDB" id="2FCG"/>
    </source>
</evidence>
<evidence type="ECO:0007744" key="33">
    <source>
        <dbReference type="PDB" id="2K6O"/>
    </source>
</evidence>
<evidence type="ECO:0007744" key="34">
    <source>
        <dbReference type="PDB" id="2LMF"/>
    </source>
</evidence>
<evidence type="ECO:0007744" key="35">
    <source>
        <dbReference type="PDB" id="2NA3"/>
    </source>
</evidence>
<evidence type="ECO:0007744" key="36">
    <source>
        <dbReference type="PDB" id="4EYC"/>
    </source>
</evidence>
<evidence type="ECO:0007744" key="37">
    <source>
        <dbReference type="PDB" id="5NMN"/>
    </source>
</evidence>
<evidence type="ECO:0007744" key="38">
    <source>
        <dbReference type="PDB" id="5NNK"/>
    </source>
</evidence>
<evidence type="ECO:0007744" key="39">
    <source>
        <dbReference type="PDB" id="5NNM"/>
    </source>
</evidence>
<evidence type="ECO:0007744" key="40">
    <source>
        <dbReference type="PDB" id="5NNT"/>
    </source>
</evidence>
<evidence type="ECO:0007744" key="41">
    <source>
        <dbReference type="PDB" id="5XNG"/>
    </source>
</evidence>
<evidence type="ECO:0007744" key="42">
    <source>
        <dbReference type="PDB" id="5XRX"/>
    </source>
</evidence>
<evidence type="ECO:0007744" key="43">
    <source>
        <dbReference type="PDB" id="6BIV"/>
    </source>
</evidence>
<evidence type="ECO:0007744" key="44">
    <source>
        <dbReference type="PDB" id="6BIX"/>
    </source>
</evidence>
<evidence type="ECO:0007744" key="45">
    <source>
        <dbReference type="PDB" id="6S6M"/>
    </source>
</evidence>
<evidence type="ECO:0007744" key="46">
    <source>
        <dbReference type="PDB" id="7NPQ"/>
    </source>
</evidence>
<evidence type="ECO:0007744" key="47">
    <source>
        <dbReference type="PDB" id="7PDC"/>
    </source>
</evidence>
<evidence type="ECO:0007829" key="48">
    <source>
        <dbReference type="PDB" id="4EYC"/>
    </source>
</evidence>
<evidence type="ECO:0007829" key="49">
    <source>
        <dbReference type="PDB" id="5NMN"/>
    </source>
</evidence>
<comment type="function">
    <text evidence="4 6 7 9 21">Antimicrobial protein that is an integral component of the innate immune system (PubMed:14978112, PubMed:16637646, PubMed:18818205, PubMed:22879591, PubMed:9736536). Binds to bacterial lipopolysaccharides (LPS) (PubMed:16637646, PubMed:18818205). Acts via neutrophil N-formyl peptide receptors to enhance the release of CXCL2 (PubMed:22879591). Postsecretory processing generates multiple cathelicidin antimicrobial peptides with various lengths which act as a topical antimicrobial defense in sweat on skin (PubMed:14978112). The unprocessed precursor form, cathelicidin antimicrobial peptide, inhibits the growth of Gram-negative E.coli and E.aerogenes with efficiencies comparable to that of the mature peptide LL-37 (in vitro) (PubMed:9736536).</text>
</comment>
<comment type="function">
    <molecule>Antibacterial peptide LL-37</molecule>
    <text evidence="2 5 6 7 9 11 12 13 14 19 21">Antimicrobial peptide that is an integral component of the innate immune system (PubMed:10417311, PubMed:15778390, PubMed:16637646, PubMed:18818205, PubMed:22879591, PubMed:32753597, PubMed:33060695, PubMed:34708076, PubMed:8681941, PubMed:9736536). Binds to bacterial lipopolysaccharides (LPS) (PubMed:10417311, PubMed:16637646, PubMed:18818205, PubMed:33060695, PubMed:9736536). Causes membrane permeabilization by forming transmembrane pores (in vitro) (PubMed:22879591, PubMed:32753597, PubMed:33060695). Causes lysis of E.coli (PubMed:10417311). Exhibits antimicrobial activity against Gram-negative bacteria such as P.aeruginosa, S.typhimurium, E.aerogenes, E.coli and P.syringae, Gram-positive bacteria such as L.monocytogenes, S.epidermidis, S.pyogenes and S.aureus, as well as vancomycin-resistant enterococci (in vitro) (PubMed:10417311, PubMed:32753597, PubMed:8681941, PubMed:9736536). Exhibits antimicrobial activity against methicillin-resistant S.aureus, P.mirabilis, and C.albicans in low-salt media, but not in media containing 100 mM NaCl (in vitro) (PubMed:9736536). Forms chiral supramolecular assemblies with quinolone signal (PQS) molecules of P.aeruginosa, which may lead to interference of bacterial quorum signaling and perturbance of bacterial biofilm formation (PubMed:34708076). May form supramolecular fiber-like assemblies on bacterial membranes (PubMed:29133814). Induces cytokine and chemokine production as well as TNF/TNFA and CSF2/GMCSF production in normal human keratinocytes (PubMed:15778390). Exhibits hemolytic activity against red blood cells (PubMed:10417311).</text>
</comment>
<comment type="function">
    <molecule>Antibacterial peptide FALL-39</molecule>
    <text evidence="16 19">Exhibits antimicrobial activity against E.coli and B.megaterium (in vitro).</text>
</comment>
<comment type="function">
    <molecule>Antibacterial peptide KR-20</molecule>
    <text evidence="4">Acts synergistically with peptides KS-30 and KR-31, killing bacteria such as S.aureus, E.coli and C.albicans at lower concentrations when present together, and maintains activity at increased salt condition (PubMed:14978112). Does not have the ability to stimulate CXCL8/IL8 release from keratinocytes (PubMed:14978112).</text>
</comment>
<comment type="function">
    <molecule>Antibacterial peptide LL-23</molecule>
    <text evidence="4">Poorly active (MIC &gt; 150 uM) against E.coli strain K12 (PubMed:14978112). Is able to induce the pro-inflammatory cytokine TNF/TNFA or the chemokine CCL2/MCP1 (PubMed:14978112).</text>
</comment>
<comment type="function">
    <molecule>Antibacterial peptide LL-29</molecule>
    <text evidence="4">Moderately antibacterial.</text>
</comment>
<comment type="function">
    <molecule>Antibacterial peptide KS-30</molecule>
    <text evidence="4">Moderately antibacterial (PubMed:14978112). Acts synergistically with peptides KR-20 and KR-31, killing bacteria such as S.aureus, E.coli and C.albicans at lower concentrations when present together, and maintain activity at increased salt condition (PubMed:14978112). Does not have the ability to stimulate CXCL8/IL8 release from keratinocytes (PubMed:14978112).</text>
</comment>
<comment type="function">
    <molecule>Antibacterial peptide RK-31</molecule>
    <text evidence="4">Acts synergistically with peptides KS-30 and KR-31, killing bacteria such as S.aureus, E.coli and C.albicans at lower concentrations when present together, and maintain activity at increased salt condition (PubMed:14978112). Does not have the ability to stimulate CXCL8/IL8 release from keratinocytes (PubMed:14978112).</text>
</comment>
<comment type="function">
    <molecule>Antibacterial peptide FF-33</molecule>
    <text evidence="4">Inhibits the growth of E.coli and B.megaterium and exhibits hemolytic activity against human red blood cells.</text>
</comment>
<comment type="subunit">
    <molecule>Antibacterial peptide LL-37</molecule>
    <text evidence="2 11 12">Monomer, homodimer or homotrimer (in vitro) (PubMed:10417311). Oligomerizes as tetra- or hexamer in solution (in vitro) (PubMed:10417311, PubMed:29133814, PubMed:32753597).</text>
</comment>
<comment type="interaction">
    <interactant intactId="EBI-6378485">
        <id>PRO_0000004724</id>
    </interactant>
    <interactant intactId="EBI-475981">
        <id>P08069</id>
        <label>IGF1R</label>
    </interactant>
    <organismsDiffer>false</organismsDiffer>
    <experiments>3</experiments>
</comment>
<comment type="subcellular location">
    <subcellularLocation>
        <location evidence="4">Secreted</location>
    </subcellularLocation>
    <subcellularLocation>
        <location evidence="16 21">Vesicle</location>
    </subcellularLocation>
    <text evidence="4 16 21">Stored as pro-peptide in granules and phagolysosomes of neutrophils (PubMed:7529412, PubMed:9736536). Secreted in sweat onto skin (PubMed:14978112).</text>
</comment>
<comment type="tissue specificity">
    <text evidence="16 17 18 19 20 21">Expressed in neutrophilic granulocytes (at protein level) (PubMed:7529412, PubMed:7615076, PubMed:7890387, PubMed:8681941, PubMed:8946956, PubMed:9736536). Expressed in bone marrow (PubMed:7890387).</text>
</comment>
<comment type="tissue specificity">
    <molecule>Antibacterial peptide LL-37</molecule>
    <text evidence="4 19">Expressed in granulocytes (at protein level) (PubMed:8681941). Expressed by the eccrine apparatus and secreted into sweat on skin (at protein level) (PubMed:14978112).</text>
</comment>
<comment type="tissue specificity">
    <molecule>Antibacterial peptide FALL-39</molecule>
    <text evidence="16">Expressed in bone marrow and testis.</text>
</comment>
<comment type="domain">
    <text evidence="10">The cathelin-like domain (CLD), which is the propeptide part, does not seem to exhibit auto-inhibitory function, as it does not inhibit the antibacterial activity of antibacterial peptide LL-37.</text>
</comment>
<comment type="domain">
    <molecule>Antibacterial peptide LL-37</molecule>
    <text evidence="21">Undergoes conformational change in the presence of lipid A, transitioning from a random coil to an alpha-helical structure.</text>
</comment>
<comment type="domain">
    <molecule>Antibacterial peptide LL-37</molecule>
    <text evidence="12 15">Residues 17-29 of LL-37 represent the active core of the antimicrobial peptide (PubMed:32753597, PubMed:35061360). Forms ribbon-like fibrils and exhibits antibacterial activity against Gram-positive M.luteus (MIC=22-25 uM) and S.hominis (MIC=39 uM) (PubMed:32753597, PubMed:35061360). Also exhibits antibacterial activity against Gram-negative E.coli (MIC=47 uM) and P.fluorescens (MIC=136 uM) (PubMed:35061360).</text>
</comment>
<comment type="PTM">
    <text>The N-terminus is blocked.</text>
</comment>
<comment type="PTM">
    <text evidence="3 9">Proteolytically cleaved by proteinase PRTN3 into antibacterial peptide LL-37 (PubMed:11389039). Proteolytically cleaved by cathepsin CTSG and neutrophil elastase ELANE (PubMed:11389039, PubMed:22879591).</text>
</comment>
<comment type="PTM">
    <molecule>Antibacterial peptide LL-37</molecule>
    <text evidence="2">Resistant to proteolytic degradation in solution, and when bound to both zwitterionic (mimicking mammalian membranes) and negatively charged membranes (mimicking bacterial membranes).</text>
</comment>
<comment type="PTM">
    <text evidence="4">After secretion onto the skin surface, the CAMP gene product is processed by a serine protease-dependent mechanism into multiple novel antimicrobial peptides distinct from and shorter than cathelicidin LL-37, such as peptides KR-20 (residues 151-170), LL-23 (residues 134-156), LL-29 (residues 134-162), KS-30 (residues 141-170), RK-31 (residues 140-170) and FF-33 (residues 138-170) (PubMed:14978112). The peptides act synergistically, killing bacteria at lower concentrations when present together, and maintain activity at increased salt condition (PubMed:14978112).</text>
</comment>
<comment type="mass spectrometry" mass="4492.9" method="Electrospray" evidence="10">
    <molecule>Antibacterial peptide LL-37</molecule>
</comment>
<comment type="mass spectrometry" mass="16424.5" method="Electrospray" evidence="10">
    <text>Precursor form pro-cathelicidin.</text>
</comment>
<comment type="mass spectrometry" mass="11949.2" method="Electrospray" evidence="10">
    <text>Propeptide Cathelin-like domain (CLD).</text>
</comment>
<comment type="pharmaceutical">
    <text evidence="21">The potent activity of antibacterial peptide LL-37 against P.aeruginosa, including mucoid and antibiotic-resistant strains, suggests that the peptide or related molecules might have utility as topical bronchopulmonary microbicides in cystic fibrosis.</text>
</comment>
<comment type="miscellaneous">
    <text evidence="21">The propeptide shows high sequence homology to cathelin, a protein of 96 residues isolated from porcine neutrophils, and is therefore also named cathelin-like domain (CLD) (PubMed:9736536). Cathelin was initially classified into the cystatin family of cysteine protease inhibitors based on its inhibitory activity against cathepsin L (PubMed:9736536). Human CLD itself lacks antimicrobial function and does not inhibit the cysteine protease, cathepsin L (PubMed:9736536).</text>
</comment>
<comment type="similarity">
    <text evidence="28">Belongs to the cathelicidin family.</text>
</comment>
<comment type="caution">
    <text evidence="28">PubMed:11238224 sequence was incorrectly assigned to originate from M.mulatta.</text>
</comment>
<gene>
    <name evidence="29" type="primary">CAMP</name>
    <name evidence="26" type="synonym">CAP18</name>
    <name evidence="23" type="synonym">FALL39</name>
    <name type="ORF">HSD26</name>
</gene>
<feature type="signal peptide" evidence="1">
    <location>
        <begin position="1"/>
        <end position="30"/>
    </location>
</feature>
<feature type="propeptide" id="PRO_0000004722" description="Cathelin-like domain (CLD)" evidence="17 27">
    <location>
        <begin position="31"/>
        <end position="131"/>
    </location>
</feature>
<feature type="peptide" id="PRO_0000004723" description="Antibacterial peptide FALL-39" evidence="16">
    <location>
        <begin position="132"/>
        <end position="170"/>
    </location>
</feature>
<feature type="peptide" id="PRO_0000004724" description="Antibacterial peptide LL-37" evidence="19">
    <location>
        <begin position="134"/>
        <end position="170"/>
    </location>
</feature>
<feature type="peptide" id="PRO_0000456769" description="Antibacterial peptide LL-29" evidence="4">
    <location>
        <begin position="134"/>
        <end position="162"/>
    </location>
</feature>
<feature type="peptide" id="PRO_0000456768" description="Antibacterial peptide LL-23" evidence="4">
    <location>
        <begin position="134"/>
        <end position="156"/>
    </location>
</feature>
<feature type="peptide" id="PRO_0000456772" description="Antibacterial peptide FF-33" evidence="4">
    <location>
        <begin position="138"/>
        <end position="170"/>
    </location>
</feature>
<feature type="peptide" id="PRO_0000456771" description="Antibacterial peptide RK-31" evidence="4">
    <location>
        <begin position="140"/>
        <end position="170"/>
    </location>
</feature>
<feature type="peptide" id="PRO_0000456770" description="Antibacterial peptide KS-30" evidence="4">
    <location>
        <begin position="141"/>
        <end position="170"/>
    </location>
</feature>
<feature type="peptide" id="PRO_0000456767" description="Antibacterial peptide KR-20" evidence="4">
    <location>
        <begin position="151"/>
        <end position="170"/>
    </location>
</feature>
<feature type="region of interest" description="Active core" evidence="12">
    <location>
        <begin position="150"/>
        <end position="162"/>
    </location>
</feature>
<feature type="disulfide bond" evidence="10 36">
    <location>
        <begin position="86"/>
        <end position="97"/>
    </location>
</feature>
<feature type="disulfide bond" evidence="10 36">
    <location>
        <begin position="108"/>
        <end position="125"/>
    </location>
</feature>
<feature type="mutagenesis site" description="Slightly increased MIC against E.coli K12 (MIC=15 compared to MIC=5)." evidence="8">
    <original>S</original>
    <variation>A</variation>
    <location>
        <position position="142"/>
    </location>
</feature>
<feature type="mutagenesis site" description="Slightly increased MIC against E.coli K12 (MIC=25 compared to MIC=5)." evidence="8">
    <original>S</original>
    <variation>V</variation>
    <location>
        <position position="142"/>
    </location>
</feature>
<feature type="mutagenesis site" description="Disrupts oligomerization. Loss of antimicrobial activity." evidence="13">
    <original>E</original>
    <variation>A</variation>
    <location>
        <position position="149"/>
    </location>
</feature>
<feature type="mutagenesis site" description="Loss of antimicrobial activity against M.luteus." evidence="12">
    <original>F</original>
    <variation>A</variation>
    <location>
        <position position="150"/>
    </location>
</feature>
<feature type="mutagenesis site" description="Loss of antimicrobial activity against M.luteus." evidence="12">
    <original>F</original>
    <variation>S</variation>
    <location>
        <position position="150"/>
    </location>
</feature>
<feature type="mutagenesis site" description="Loss of antimicrobial activity against M.luteus." evidence="12">
    <original>K</original>
    <variation>A</variation>
    <location>
        <position position="151"/>
    </location>
</feature>
<feature type="mutagenesis site" description="Reduced antimicrobial activity against M.luteus." evidence="12">
    <original>K</original>
    <variation>H</variation>
    <location>
        <position position="151"/>
    </location>
</feature>
<feature type="mutagenesis site" description="Loss of antimicrobial activity against M.luteus." evidence="12">
    <original>K</original>
    <variation>Q</variation>
    <location>
        <position position="151"/>
    </location>
</feature>
<feature type="mutagenesis site" description="No impact on antimicrobial activity against M.luteus." evidence="12">
    <original>K</original>
    <variation>R</variation>
    <location>
        <position position="151"/>
    </location>
</feature>
<feature type="mutagenesis site" description="No impact on antimicrobial activity against M.luteus." evidence="12">
    <original>Q</original>
    <variation>A</variation>
    <location>
        <position position="155"/>
    </location>
</feature>
<feature type="mutagenesis site" description="Impacts oligomerization. Loss of antimicrobial activity." evidence="13">
    <original>R</original>
    <variation>A</variation>
    <location>
        <position position="156"/>
    </location>
</feature>
<feature type="mutagenesis site" description="Loss of antimicrobial activity against M.luteus." evidence="12">
    <original>I</original>
    <variation>A</variation>
    <location>
        <position position="157"/>
    </location>
</feature>
<feature type="mutagenesis site" description="Loss of antimicrobial activity against M.luteus." evidence="12">
    <original>I</original>
    <variation>D</variation>
    <location>
        <position position="157"/>
    </location>
</feature>
<feature type="mutagenesis site" description="Loss of antimicrobial activity against M.luteus." evidence="12">
    <original>I</original>
    <variation>K</variation>
    <location>
        <position position="157"/>
    </location>
</feature>
<feature type="mutagenesis site" description="Loss of antimicrobial activity against M.luteus." evidence="12">
    <original>I</original>
    <variation>Q</variation>
    <location>
        <position position="157"/>
    </location>
</feature>
<feature type="mutagenesis site" description="Loss of antimicrobial activity against M.luteus." evidence="12">
    <original>I</original>
    <variation>S</variation>
    <location>
        <position position="157"/>
    </location>
</feature>
<feature type="mutagenesis site" description="Loss of antimicrobial activity against M.luteus." evidence="12">
    <original>F</original>
    <variation>A</variation>
    <location>
        <position position="160"/>
    </location>
</feature>
<feature type="sequence conflict" description="In Ref. 1, 6, 7 and 9; CAG46759." evidence="28" ref="1 6 7 9">
    <original>D</original>
    <variation>N</variation>
    <location>
        <position position="6"/>
    </location>
</feature>
<feature type="helix" evidence="48">
    <location>
        <begin position="35"/>
        <end position="49"/>
    </location>
</feature>
<feature type="strand" evidence="48">
    <location>
        <begin position="53"/>
        <end position="61"/>
    </location>
</feature>
<feature type="strand" evidence="48">
    <location>
        <begin position="75"/>
        <end position="87"/>
    </location>
</feature>
<feature type="helix" evidence="48">
    <location>
        <begin position="94"/>
        <end position="96"/>
    </location>
</feature>
<feature type="strand" evidence="48">
    <location>
        <begin position="105"/>
        <end position="112"/>
    </location>
</feature>
<feature type="strand" evidence="48">
    <location>
        <begin position="122"/>
        <end position="126"/>
    </location>
</feature>
<feature type="helix" evidence="49">
    <location>
        <begin position="135"/>
        <end position="163"/>
    </location>
</feature>
<protein>
    <recommendedName>
        <fullName evidence="29">Cathelicidin antimicrobial peptide</fullName>
    </recommendedName>
    <alternativeName>
        <fullName evidence="24">18 kDa cationic antimicrobial protein</fullName>
        <shortName evidence="24">CAP-18</shortName>
        <shortName evidence="24">hCAP-18</shortName>
    </alternativeName>
    <component>
        <recommendedName>
            <fullName evidence="23">Antibacterial peptide FALL-39</fullName>
        </recommendedName>
        <alternativeName>
            <fullName evidence="23">FALL-39 peptide antibiotic</fullName>
        </alternativeName>
    </component>
    <component>
        <recommendedName>
            <fullName evidence="25">Antibacterial peptide LL-37</fullName>
        </recommendedName>
    </component>
    <component>
        <recommendedName>
            <fullName evidence="22">Antibacterial peptide KR-20</fullName>
        </recommendedName>
    </component>
    <component>
        <recommendedName>
            <fullName evidence="22">Antibacterial peptide LL-23</fullName>
        </recommendedName>
    </component>
    <component>
        <recommendedName>
            <fullName evidence="22">Antibacterial peptide LL-29</fullName>
        </recommendedName>
    </component>
    <component>
        <recommendedName>
            <fullName evidence="22">Antibacterial peptide KS-30</fullName>
        </recommendedName>
    </component>
    <component>
        <recommendedName>
            <fullName evidence="22">Antibacterial peptide RK-31</fullName>
        </recommendedName>
    </component>
    <component>
        <recommendedName>
            <fullName evidence="22">Antibacterial peptide FF-33</fullName>
        </recommendedName>
    </component>
</protein>
<reference key="1">
    <citation type="journal article" date="1995" name="Proc. Natl. Acad. Sci. U.S.A.">
        <title>FALL-39, a putative human peptide antibiotic, is cysteine-free and expressed in bone marrow and testis.</title>
        <authorList>
            <person name="Agerberth B."/>
            <person name="Gunne H."/>
            <person name="Odeberg J."/>
            <person name="Kogner P."/>
            <person name="Boman H.G."/>
            <person name="Gudmundsson G.H."/>
        </authorList>
    </citation>
    <scope>NUCLEOTIDE SEQUENCE [MRNA]</scope>
    <scope>SYNTHESIS OF 132-170</scope>
    <scope>FUNCTION</scope>
    <scope>TISSUE SPECIFICITY</scope>
    <source>
        <tissue>Bone marrow</tissue>
    </source>
</reference>
<reference key="2">
    <citation type="journal article" date="1995" name="FEBS Lett.">
        <title>hCAP-18, a cathelin/pro-bactenecin-like protein of human neutrophil specific granules.</title>
        <authorList>
            <person name="Cowland J.B."/>
            <person name="Johnsen A.H."/>
            <person name="Borregaard N."/>
        </authorList>
    </citation>
    <scope>NUCLEOTIDE SEQUENCE [MRNA]</scope>
    <scope>PROTEIN SEQUENCE OF 42-68 AND 83-100</scope>
    <scope>TISSUE SPECIFICITY</scope>
    <source>
        <tissue>Bone marrow</tissue>
    </source>
</reference>
<reference key="3">
    <citation type="journal article" date="1995" name="Infect. Immun.">
        <title>Human CAP18: a novel antimicrobial lipopolysaccharide-binding protein.</title>
        <authorList>
            <person name="Larrick J.W."/>
            <person name="Hirata M."/>
            <person name="Balint R.F."/>
            <person name="Lee J."/>
            <person name="Zhong J."/>
            <person name="Wright S.C."/>
        </authorList>
    </citation>
    <scope>NUCLEOTIDE SEQUENCE [MRNA]</scope>
    <scope>TISSUE SPECIFICITY</scope>
    <source>
        <tissue>Bone marrow</tissue>
    </source>
</reference>
<reference key="4">
    <citation type="journal article" date="1996" name="FEBS Lett.">
        <title>Structural, functional analysis and localization of the human CAP18 gene.</title>
        <authorList>
            <person name="Larrick J.W."/>
            <person name="Lee J."/>
            <person name="Ma S."/>
            <person name="Li X."/>
            <person name="Francke U."/>
            <person name="Wright S.C."/>
            <person name="Balint R.F."/>
        </authorList>
    </citation>
    <scope>NUCLEOTIDE SEQUENCE [GENOMIC DNA]</scope>
    <scope>TISSUE SPECIFICITY</scope>
</reference>
<reference key="5">
    <citation type="journal article" date="1996" name="Eur. J. Biochem.">
        <title>The human gene FALL39 and processing of the cathelin precursor to the antibacterial peptide LL-37 in granulocytes.</title>
        <authorList>
            <person name="Gudmundsson G.H."/>
            <person name="Agerberth B."/>
            <person name="Odeberg J."/>
            <person name="Bergman T."/>
            <person name="Olsson B."/>
            <person name="Salcedo R."/>
        </authorList>
    </citation>
    <scope>NUCLEOTIDE SEQUENCE [GENOMIC DNA]</scope>
    <scope>PROTEIN SEQUENCE OF 134-143</scope>
    <scope>FUNCTION</scope>
    <scope>TISSUE SPECIFICITY</scope>
</reference>
<reference key="6">
    <citation type="submission" date="2002-10" db="EMBL/GenBank/DDBJ databases">
        <authorList>
            <person name="Gao Y."/>
            <person name="Huang Y.F."/>
            <person name="Xia X.Y."/>
        </authorList>
    </citation>
    <scope>NUCLEOTIDE SEQUENCE [MRNA]</scope>
    <source>
        <tissue>Epididymis</tissue>
    </source>
</reference>
<reference key="7">
    <citation type="submission" date="2003-03" db="EMBL/GenBank/DDBJ databases">
        <title>A new spermatogenesis-related gene.</title>
        <authorList>
            <person name="Wu N."/>
            <person name="Miao S.Y."/>
            <person name="Zhang X.D."/>
            <person name="Qiao Y."/>
            <person name="Liang G."/>
            <person name="Wang L.F."/>
        </authorList>
    </citation>
    <scope>NUCLEOTIDE SEQUENCE [LARGE SCALE MRNA]</scope>
    <source>
        <tissue>Testis</tissue>
    </source>
</reference>
<reference key="8">
    <citation type="journal article" date="2001" name="Clin. Diagn. Lab. Immunol.">
        <title>Rhesus monkey (Macaca mulatta) mucosal antimicrobial peptides are close homologues of human molecules.</title>
        <authorList>
            <person name="Bals R."/>
            <person name="Lang C."/>
            <person name="Weiner D.J."/>
            <person name="Vogelmeier C."/>
            <person name="Welsch U."/>
            <person name="Wilson J.M."/>
        </authorList>
    </citation>
    <scope>NUCLEOTIDE SEQUENCE [MRNA]</scope>
</reference>
<reference key="9">
    <citation type="submission" date="2004-06" db="EMBL/GenBank/DDBJ databases">
        <title>Cloning of human full open reading frames in Gateway(TM) system entry vector (pDONR201).</title>
        <authorList>
            <person name="Halleck A."/>
            <person name="Ebert L."/>
            <person name="Mkoundinya M."/>
            <person name="Schick M."/>
            <person name="Eisenstein S."/>
            <person name="Neubert P."/>
            <person name="Kstrang K."/>
            <person name="Schatten R."/>
            <person name="Shen B."/>
            <person name="Henze S."/>
            <person name="Mar W."/>
            <person name="Korn B."/>
            <person name="Zuo D."/>
            <person name="Hu Y."/>
            <person name="LaBaer J."/>
        </authorList>
    </citation>
    <scope>NUCLEOTIDE SEQUENCE [LARGE SCALE MRNA]</scope>
</reference>
<reference key="10">
    <citation type="journal article" date="2004" name="Genome Res.">
        <title>The status, quality, and expansion of the NIH full-length cDNA project: the Mammalian Gene Collection (MGC).</title>
        <authorList>
            <consortium name="The MGC Project Team"/>
        </authorList>
    </citation>
    <scope>NUCLEOTIDE SEQUENCE [LARGE SCALE MRNA]</scope>
</reference>
<reference key="11">
    <citation type="journal article" date="1998" name="Antimicrob. Agents Chemother.">
        <title>Activities of LL-37, a cathelin-associated antimicrobial peptide of human neutrophils.</title>
        <authorList>
            <person name="Turner J."/>
            <person name="Cho Y."/>
            <person name="Dinh N.N."/>
            <person name="Waring A.J."/>
            <person name="Lehrer R.I."/>
        </authorList>
    </citation>
    <scope>FUNCTION</scope>
    <scope>SUBCELLULAR LOCATION</scope>
    <scope>PHARMACEUTICAL</scope>
</reference>
<reference key="12">
    <citation type="journal article" date="1999" name="Biochem. J.">
        <title>Structure and organization of the human antimicrobial peptide LL-37 in phospholipid membranes: relevance to the molecular basis for its non-cell-selective activity.</title>
        <authorList>
            <person name="Oren Z."/>
            <person name="Lerman J.C."/>
            <person name="Gudmundsson G.H."/>
            <person name="Agerberth B."/>
            <person name="Shai Y."/>
        </authorList>
    </citation>
    <scope>FUNCTION</scope>
    <scope>SUBUNIT</scope>
    <scope>PROTEOLYTIC CLEAVAGE</scope>
    <scope>SYNTHESIS OF 134-170</scope>
</reference>
<reference key="13">
    <citation type="journal article" date="2001" name="Blood">
        <title>Human cathelicidin, hCAP-18, is processed to the antimicrobial peptide LL-37 by extracellular cleavage with proteinase 3.</title>
        <authorList>
            <person name="Soerensen O.E."/>
            <person name="Follin P."/>
            <person name="Johnsen A.H."/>
            <person name="Calafat J."/>
            <person name="Tjabringa G.S."/>
            <person name="Hiemstra P.S."/>
            <person name="Borregaard N."/>
        </authorList>
    </citation>
    <scope>TISSUE SPECIFICITY</scope>
    <scope>PROTEOLYTIC CLEAVAGE</scope>
    <scope>FUNCTION</scope>
</reference>
<reference key="14">
    <citation type="journal article" date="2004" name="J. Immunol.">
        <title>Postsecretory processing generates multiple cathelicidins for enhanced topical antimicrobial defense.</title>
        <authorList>
            <person name="Murakami M."/>
            <person name="Lopez-Garcia B."/>
            <person name="Braff M."/>
            <person name="Dorschner R.A."/>
            <person name="Gallo R.L."/>
        </authorList>
    </citation>
    <scope>FUNCTION</scope>
    <scope>SUBCELLULAR LOCATION</scope>
    <scope>TISSUE SPECIFICITY</scope>
    <scope>PROTEOLYTIC CLEAVAGE</scope>
</reference>
<reference key="15">
    <citation type="journal article" date="2005" name="J. Immunol.">
        <title>Structure-function relationships among human cathelicidin peptides: dissociation of antimicrobial properties from host immunostimulatory activities.</title>
        <authorList>
            <person name="Braff M.H."/>
            <person name="Hawkins M.A."/>
            <person name="Di Nardo A."/>
            <person name="Lopez-Garcia B."/>
            <person name="Howell M.D."/>
            <person name="Wong C."/>
            <person name="Lin K."/>
            <person name="Streib J.E."/>
            <person name="Dorschner R."/>
            <person name="Leung D.Y."/>
            <person name="Gallo R.L."/>
        </authorList>
    </citation>
    <scope>FUNCTION</scope>
</reference>
<reference key="16">
    <citation type="journal article" date="2011" name="Biophys. J.">
        <title>Transmembrane pores formed by human antimicrobial peptide LL-37.</title>
        <authorList>
            <person name="Lee C.C."/>
            <person name="Sun Y."/>
            <person name="Qian S."/>
            <person name="Huang H.W."/>
        </authorList>
    </citation>
    <scope>SYNTHESIS OF 134-170</scope>
    <scope>FUNCTION</scope>
</reference>
<reference key="17">
    <citation type="journal article" date="2012" name="J. Biol. Chem.">
        <title>Cathepsin G-regulated release of formyl peptide receptor agonists modulate neutrophil effector functions.</title>
        <authorList>
            <person name="Woloszynek J.C."/>
            <person name="Hu Y."/>
            <person name="Pham C.T."/>
        </authorList>
    </citation>
    <scope>FUNCTION</scope>
    <scope>PROTEOLYTIC CLEAVAGE</scope>
</reference>
<reference key="18">
    <citation type="journal article" date="2021" name="Front. Mol. Biosci.">
        <title>Quorum Sensing Pseudomonas Quinolone Signal Forms Chiral Supramolecular Assemblies With the Host Defense Peptide LL-37.</title>
        <authorList>
            <person name="Zsila F."/>
            <person name="Ricci M."/>
            <person name="Szigyarto I.C."/>
            <person name="Singh P."/>
            <person name="Beke-Somfai T."/>
        </authorList>
    </citation>
    <scope>FUNCTION</scope>
    <scope>SYNTHESIS OF 134-170</scope>
</reference>
<reference evidence="30 31 32" key="19">
    <citation type="journal article" date="2006" name="J. Am. Chem. Soc.">
        <title>Solution structures of human LL-37 fragments and NMR-based identification of a minimal membrane-targeting antimicrobial and anticancer region.</title>
        <authorList>
            <person name="Li X."/>
            <person name="Li Y."/>
            <person name="Han H."/>
            <person name="Miller D.W."/>
            <person name="Wang G."/>
        </authorList>
    </citation>
    <scope>STRUCTURE BY NMR OF 146-170</scope>
    <scope>FUNCTION</scope>
</reference>
<reference evidence="33" key="20">
    <citation type="journal article" date="2008" name="J. Biol. Chem.">
        <title>Structures of human host defense cathelicidin LL-37 and its smallest antimicrobial peptide KR-12 in lipid micelles.</title>
        <authorList>
            <person name="Wang G."/>
        </authorList>
    </citation>
    <scope>STRUCTURE BY NMR OF 134-170</scope>
    <scope>FUNCTION</scope>
</reference>
<reference evidence="34" key="21">
    <citation type="journal article" date="2012" name="Biochemistry">
        <title>Structure, dynamics, and antimicrobial and immune modulatory activities of human LL-23 and its single-residue variants mutated on the basis of homologous primate cathelicidins.</title>
        <authorList>
            <person name="Wang G."/>
            <person name="Elliott M."/>
            <person name="Cogen A.L."/>
            <person name="Ezell E.L."/>
            <person name="Gallo R.L."/>
            <person name="Hancock R.E."/>
        </authorList>
    </citation>
    <scope>STRUCTURE BY NMR OF 134-156</scope>
    <scope>PTM</scope>
    <scope>MUTAGENESIS OF SER-142</scope>
</reference>
<reference evidence="36" key="22">
    <citation type="journal article" date="2013" name="Biochemistry">
        <title>Structural and functional analysis of the pro-domain of human cathelicidin, LL-37.</title>
        <authorList>
            <person name="Pazgier M."/>
            <person name="Ericksen B."/>
            <person name="Ling M."/>
            <person name="Toth E."/>
            <person name="Shi J."/>
            <person name="Li X."/>
            <person name="Galliher-Beckley A."/>
            <person name="Lan L."/>
            <person name="Zou G."/>
            <person name="Zhan C."/>
            <person name="Yuan W."/>
            <person name="Pozharski E."/>
            <person name="Lu W."/>
        </authorList>
    </citation>
    <scope>X-RAY CRYSTALLOGRAPHY (1.90 ANGSTROMS) OF 31-133</scope>
    <scope>FUNCTION</scope>
    <scope>DISULFIDE BONDS</scope>
    <scope>MASS SPECTROMETRY</scope>
    <scope>DOMAIN</scope>
</reference>
<reference evidence="35" key="23">
    <citation type="submission" date="2015-12" db="PDB data bank">
        <title>Backbone-cyclized stable peptide-dimers derived from the human cathelicidin LL-37 mediate potent antimicrobial activity.</title>
        <authorList>
            <person name="Gunasekera S."/>
            <person name="Muhammad T."/>
            <person name="Stromstedt A.A."/>
            <person name="Rosengren K.J."/>
            <person name="Goransson U."/>
        </authorList>
    </citation>
    <scope>STRUCTURE BY NMR OF 151-162</scope>
</reference>
<reference evidence="41 42" key="24">
    <citation type="journal article" date="2017" name="ACS Appl. Mater. Interfaces">
        <title>Conformational Aspects of High Content Packing of Antimicrobial Peptides in Polymer Microgels.</title>
        <authorList>
            <person name="Singh S."/>
            <person name="Datta A."/>
            <person name="Borro B.C."/>
            <person name="Davoudi M."/>
            <person name="Schmidtchen A."/>
            <person name="Bhunia A."/>
            <person name="Malmsten M."/>
        </authorList>
    </citation>
    <scope>STRUCTURE BY NMR OF 149-165</scope>
</reference>
<reference evidence="37 38 39 40" key="25">
    <citation type="journal article" date="2017" name="Sci. Rep.">
        <title>Structural remodeling and oligomerization of human cathelicidin on membranes suggest fibril-like structures as active species.</title>
        <authorList>
            <person name="Sancho-Vaello E."/>
            <person name="Francois P."/>
            <person name="Bonetti E.J."/>
            <person name="Lilie H."/>
            <person name="Finger S."/>
            <person name="Gil-Ortiz F."/>
            <person name="Gil-Carton D."/>
            <person name="Zeth K."/>
        </authorList>
    </citation>
    <scope>X-RAY CRYSTALLOGRAPHY (0.95 ANGSTROMS) OF 134-170</scope>
    <scope>FUNCTION</scope>
    <scope>SUBUNIT</scope>
</reference>
<reference evidence="43 44" key="26">
    <citation type="journal article" date="2018" name="J. Biol. Chem.">
        <title>The interplay between citrullination and HLA-DRB1 polymorphism in shaping peptide binding hierarchies in rheumatoid arthritis.</title>
        <authorList>
            <person name="Ting Y.T."/>
            <person name="Petersen J."/>
            <person name="Ramarathinam S.H."/>
            <person name="Scally S.W."/>
            <person name="Loh K.L."/>
            <person name="Thomas R."/>
            <person name="Suri A."/>
            <person name="Baker D.G."/>
            <person name="Purcell A.W."/>
            <person name="Reid H.H."/>
            <person name="Rossjohn J."/>
        </authorList>
    </citation>
    <scope>X-RAY CRYSTALLOGRAPHY (2.20 ANGSTROMS) OF CITRULLINATED 83-95 IN COMPLEX WITH HLA-DRA AND HLA-DRB1</scope>
</reference>
<reference evidence="45" key="27">
    <citation type="journal article" date="2020" name="Nat. Commun.">
        <title>The Human LL-37(17-29) antimicrobial peptide reveals a functional supramolecular structure.</title>
        <authorList>
            <person name="Engelberg Y."/>
            <person name="Landau M."/>
        </authorList>
    </citation>
    <scope>X-RAY CRYSTALLOGRAPHY (1.35 ANGSTROMS) OF 150-162</scope>
    <scope>FUNCTION</scope>
    <scope>DOMAIN</scope>
    <scope>MUTAGENESIS OF PHE-150; LYS-151; GLN-155; ILE-157 AND PHE-160</scope>
</reference>
<reference evidence="47" key="28">
    <citation type="journal article" date="2020" name="Sci. Rep.">
        <title>The structure of the antimicrobial human cathelicidin LL-37 shows oligomerization and channel formation in the presence of membrane mimics.</title>
        <authorList>
            <person name="Sancho-Vaello E."/>
            <person name="Gil-Carton D."/>
            <person name="Francois P."/>
            <person name="Bonetti E.J."/>
            <person name="Kreir M."/>
            <person name="Pothula K.R."/>
            <person name="Kleinekathofer U."/>
            <person name="Zeth K."/>
        </authorList>
    </citation>
    <scope>X-RAY CRYSTALLOGRAPHY (1.83 ANGSTROMS) OF 134-170</scope>
    <scope>FUNCTION</scope>
    <scope>SUBUNIT</scope>
    <scope>MUTAGENESIS OF GLU-149 AND ARG-156</scope>
</reference>
<reference evidence="46" key="29">
    <citation type="journal article" date="2022" name="Biomacromolecules">
        <title>Rare by Natural Selection: Disulfide-Bonded Supramolecular Antimicrobial Peptides.</title>
        <authorList>
            <person name="Engelberg Y."/>
            <person name="Ragonis-Bachar P."/>
            <person name="Landau M."/>
        </authorList>
    </citation>
    <scope>X-RAY CRYSTALLOGRAPHY (1.50 ANGSTROMS) OF 150-162 OF MUTANT CYS-153</scope>
    <scope>DOMAIN</scope>
</reference>
<proteinExistence type="evidence at protein level"/>
<accession>P49913</accession>
<accession>Q71SN9</accession>
<dbReference type="EMBL" id="Z38026">
    <property type="protein sequence ID" value="CAA86115.1"/>
    <property type="molecule type" value="mRNA"/>
</dbReference>
<dbReference type="EMBL" id="X89658">
    <property type="protein sequence ID" value="CAA61805.1"/>
    <property type="molecule type" value="mRNA"/>
</dbReference>
<dbReference type="EMBL" id="U19970">
    <property type="protein sequence ID" value="AAA74084.1"/>
    <property type="molecule type" value="mRNA"/>
</dbReference>
<dbReference type="EMBL" id="U48795">
    <property type="protein sequence ID" value="AAC02634.1"/>
    <property type="molecule type" value="Genomic_DNA"/>
</dbReference>
<dbReference type="EMBL" id="X96735">
    <property type="status" value="NOT_ANNOTATED_CDS"/>
    <property type="molecule type" value="Genomic_DNA"/>
</dbReference>
<dbReference type="EMBL" id="AY162210">
    <property type="protein sequence ID" value="AAN78318.1"/>
    <property type="molecule type" value="mRNA"/>
</dbReference>
<dbReference type="EMBL" id="AY251531">
    <property type="protein sequence ID" value="AAP20054.1"/>
    <property type="molecule type" value="mRNA"/>
</dbReference>
<dbReference type="EMBL" id="AF288284">
    <property type="protein sequence ID" value="AAG40802.1"/>
    <property type="molecule type" value="mRNA"/>
</dbReference>
<dbReference type="EMBL" id="CR457083">
    <property type="protein sequence ID" value="CAG33364.1"/>
    <property type="molecule type" value="mRNA"/>
</dbReference>
<dbReference type="EMBL" id="CR541961">
    <property type="protein sequence ID" value="CAG46759.1"/>
    <property type="molecule type" value="mRNA"/>
</dbReference>
<dbReference type="EMBL" id="BC055089">
    <property type="protein sequence ID" value="AAH55089.1"/>
    <property type="molecule type" value="mRNA"/>
</dbReference>
<dbReference type="CCDS" id="CCDS2762.3"/>
<dbReference type="PIR" id="I38932">
    <property type="entry name" value="I38932"/>
</dbReference>
<dbReference type="PIR" id="S74248">
    <property type="entry name" value="S74248"/>
</dbReference>
<dbReference type="RefSeq" id="NP_004336.3">
    <property type="nucleotide sequence ID" value="NM_004345.4"/>
</dbReference>
<dbReference type="PDB" id="2FBS">
    <property type="method" value="NMR"/>
    <property type="chains" value="N=150-162"/>
</dbReference>
<dbReference type="PDB" id="2FBU">
    <property type="method" value="NMR"/>
    <property type="chains" value="H=134-145"/>
</dbReference>
<dbReference type="PDB" id="2FCG">
    <property type="method" value="NMR"/>
    <property type="chains" value="F=146-170"/>
</dbReference>
<dbReference type="PDB" id="2K6O">
    <property type="method" value="NMR"/>
    <property type="chains" value="A=134-170"/>
</dbReference>
<dbReference type="PDB" id="2LMF">
    <property type="method" value="NMR"/>
    <property type="chains" value="A=134-156"/>
</dbReference>
<dbReference type="PDB" id="2NA3">
    <property type="method" value="NMR"/>
    <property type="chains" value="A=151-162"/>
</dbReference>
<dbReference type="PDB" id="4EYC">
    <property type="method" value="X-ray"/>
    <property type="resolution" value="1.90 A"/>
    <property type="chains" value="A/B=31-133"/>
</dbReference>
<dbReference type="PDB" id="5NMN">
    <property type="method" value="X-ray"/>
    <property type="resolution" value="0.95 A"/>
    <property type="chains" value="A=134-170"/>
</dbReference>
<dbReference type="PDB" id="5NNK">
    <property type="method" value="X-ray"/>
    <property type="resolution" value="1.80 A"/>
    <property type="chains" value="A=134-170"/>
</dbReference>
<dbReference type="PDB" id="5NNM">
    <property type="method" value="X-ray"/>
    <property type="resolution" value="1.90 A"/>
    <property type="chains" value="A/B=134-170"/>
</dbReference>
<dbReference type="PDB" id="5NNT">
    <property type="method" value="X-ray"/>
    <property type="resolution" value="2.21 A"/>
    <property type="chains" value="A/B=134-170"/>
</dbReference>
<dbReference type="PDB" id="5XNG">
    <property type="method" value="NMR"/>
    <property type="chains" value="A=149-165"/>
</dbReference>
<dbReference type="PDB" id="5XRX">
    <property type="method" value="NMR"/>
    <property type="chains" value="A=149-165"/>
</dbReference>
<dbReference type="PDB" id="6BIV">
    <property type="method" value="X-ray"/>
    <property type="resolution" value="2.90 A"/>
    <property type="chains" value="C=83-95"/>
</dbReference>
<dbReference type="PDB" id="6BIX">
    <property type="method" value="X-ray"/>
    <property type="resolution" value="2.20 A"/>
    <property type="chains" value="C=83-95"/>
</dbReference>
<dbReference type="PDB" id="6S6M">
    <property type="method" value="X-ray"/>
    <property type="resolution" value="1.35 A"/>
    <property type="chains" value="A/B=150-162"/>
</dbReference>
<dbReference type="PDB" id="7NPQ">
    <property type="method" value="X-ray"/>
    <property type="resolution" value="1.50 A"/>
    <property type="chains" value="A/B=150-162"/>
</dbReference>
<dbReference type="PDB" id="7PDC">
    <property type="method" value="X-ray"/>
    <property type="resolution" value="1.83 A"/>
    <property type="chains" value="A/B=134-170"/>
</dbReference>
<dbReference type="PDB" id="7SAY">
    <property type="method" value="X-ray"/>
    <property type="resolution" value="2.10 A"/>
    <property type="chains" value="E/F=134-170"/>
</dbReference>
<dbReference type="PDB" id="8DEW">
    <property type="method" value="EM"/>
    <property type="resolution" value="2.89 A"/>
    <property type="chains" value="D=150-165"/>
</dbReference>
<dbReference type="PDBsum" id="2FBS"/>
<dbReference type="PDBsum" id="2FBU"/>
<dbReference type="PDBsum" id="2FCG"/>
<dbReference type="PDBsum" id="2K6O"/>
<dbReference type="PDBsum" id="2LMF"/>
<dbReference type="PDBsum" id="2NA3"/>
<dbReference type="PDBsum" id="4EYC"/>
<dbReference type="PDBsum" id="5NMN"/>
<dbReference type="PDBsum" id="5NNK"/>
<dbReference type="PDBsum" id="5NNM"/>
<dbReference type="PDBsum" id="5NNT"/>
<dbReference type="PDBsum" id="5XNG"/>
<dbReference type="PDBsum" id="5XRX"/>
<dbReference type="PDBsum" id="6BIV"/>
<dbReference type="PDBsum" id="6BIX"/>
<dbReference type="PDBsum" id="6S6M"/>
<dbReference type="PDBsum" id="7NPQ"/>
<dbReference type="PDBsum" id="7PDC"/>
<dbReference type="PDBsum" id="7SAY"/>
<dbReference type="PDBsum" id="8DEW"/>
<dbReference type="BMRB" id="P49913"/>
<dbReference type="EMDB" id="EMD-27401"/>
<dbReference type="SMR" id="P49913"/>
<dbReference type="BioGRID" id="107270">
    <property type="interactions" value="21"/>
</dbReference>
<dbReference type="FunCoup" id="P49913">
    <property type="interactions" value="282"/>
</dbReference>
<dbReference type="IntAct" id="P49913">
    <property type="interactions" value="3"/>
</dbReference>
<dbReference type="STRING" id="9606.ENSP00000296435"/>
<dbReference type="DrugBank" id="DB02345">
    <property type="generic name" value="Selenocysteine"/>
</dbReference>
<dbReference type="TCDB" id="1.C.33.1.10">
    <property type="family name" value="the cathelicidin (cathelicidin) family"/>
</dbReference>
<dbReference type="GlyCosmos" id="P49913">
    <property type="glycosylation" value="1 site, 2 glycans"/>
</dbReference>
<dbReference type="GlyGen" id="P49913">
    <property type="glycosylation" value="1 site, 2 O-linked glycans (1 site)"/>
</dbReference>
<dbReference type="iPTMnet" id="P49913"/>
<dbReference type="PhosphoSitePlus" id="P49913"/>
<dbReference type="BioMuta" id="CAMP"/>
<dbReference type="DMDM" id="1706745"/>
<dbReference type="MassIVE" id="P49913"/>
<dbReference type="PaxDb" id="9606-ENSP00000296435"/>
<dbReference type="PeptideAtlas" id="P49913"/>
<dbReference type="ProteomicsDB" id="56178"/>
<dbReference type="Pumba" id="P49913"/>
<dbReference type="ABCD" id="P49913">
    <property type="antibodies" value="13 sequenced antibodies"/>
</dbReference>
<dbReference type="Antibodypedia" id="13077">
    <property type="antibodies" value="480 antibodies from 36 providers"/>
</dbReference>
<dbReference type="DNASU" id="820"/>
<dbReference type="Ensembl" id="ENST00000652295.2">
    <property type="protein sequence ID" value="ENSP00000498425.1"/>
    <property type="gene ID" value="ENSG00000164047.6"/>
</dbReference>
<dbReference type="GeneID" id="820"/>
<dbReference type="KEGG" id="hsa:820"/>
<dbReference type="MANE-Select" id="ENST00000652295.2">
    <property type="protein sequence ID" value="ENSP00000498425.1"/>
    <property type="RefSeq nucleotide sequence ID" value="NM_004345.5"/>
    <property type="RefSeq protein sequence ID" value="NP_004336.4"/>
</dbReference>
<dbReference type="AGR" id="HGNC:1472"/>
<dbReference type="CTD" id="820"/>
<dbReference type="DisGeNET" id="820"/>
<dbReference type="GeneCards" id="CAMP"/>
<dbReference type="HGNC" id="HGNC:1472">
    <property type="gene designation" value="CAMP"/>
</dbReference>
<dbReference type="HPA" id="ENSG00000164047">
    <property type="expression patterns" value="Tissue enriched (bone)"/>
</dbReference>
<dbReference type="MIM" id="600474">
    <property type="type" value="gene"/>
</dbReference>
<dbReference type="neXtProt" id="NX_P49913"/>
<dbReference type="OpenTargets" id="ENSG00000164047"/>
<dbReference type="PharmGKB" id="PA26054"/>
<dbReference type="VEuPathDB" id="HostDB:ENSG00000164047"/>
<dbReference type="eggNOG" id="ENOG502SAES">
    <property type="taxonomic scope" value="Eukaryota"/>
</dbReference>
<dbReference type="GeneTree" id="ENSGT00390000000410"/>
<dbReference type="InParanoid" id="P49913"/>
<dbReference type="OrthoDB" id="9930485at2759"/>
<dbReference type="PAN-GO" id="P49913">
    <property type="GO annotations" value="6 GO annotations based on evolutionary models"/>
</dbReference>
<dbReference type="PhylomeDB" id="P49913"/>
<dbReference type="TreeFam" id="TF338457"/>
<dbReference type="BioCyc" id="MetaCyc:ENSG00000164047-MONOMER"/>
<dbReference type="PathwayCommons" id="P49913"/>
<dbReference type="Reactome" id="R-HSA-6798695">
    <property type="pathway name" value="Neutrophil degranulation"/>
</dbReference>
<dbReference type="Reactome" id="R-HSA-6803157">
    <property type="pathway name" value="Antimicrobial peptides"/>
</dbReference>
<dbReference type="SignaLink" id="P49913"/>
<dbReference type="SIGNOR" id="P49913"/>
<dbReference type="BioGRID-ORCS" id="820">
    <property type="hits" value="13 hits in 1147 CRISPR screens"/>
</dbReference>
<dbReference type="EvolutionaryTrace" id="P49913"/>
<dbReference type="GeneWiki" id="Cathelicidin"/>
<dbReference type="GenomeRNAi" id="820"/>
<dbReference type="Pharos" id="P49913">
    <property type="development level" value="Tbio"/>
</dbReference>
<dbReference type="PRO" id="PR:P49913"/>
<dbReference type="Proteomes" id="UP000005640">
    <property type="component" value="Chromosome 3"/>
</dbReference>
<dbReference type="RNAct" id="P49913">
    <property type="molecule type" value="protein"/>
</dbReference>
<dbReference type="Bgee" id="ENSG00000164047">
    <property type="expression patterns" value="Expressed in trabecular bone tissue and 117 other cell types or tissues"/>
</dbReference>
<dbReference type="ExpressionAtlas" id="P49913">
    <property type="expression patterns" value="baseline and differential"/>
</dbReference>
<dbReference type="GO" id="GO:0042995">
    <property type="term" value="C:cell projection"/>
    <property type="evidence" value="ECO:0007669"/>
    <property type="project" value="Ensembl"/>
</dbReference>
<dbReference type="GO" id="GO:0070062">
    <property type="term" value="C:extracellular exosome"/>
    <property type="evidence" value="ECO:0007005"/>
    <property type="project" value="UniProtKB"/>
</dbReference>
<dbReference type="GO" id="GO:0005576">
    <property type="term" value="C:extracellular region"/>
    <property type="evidence" value="ECO:0000304"/>
    <property type="project" value="Reactome"/>
</dbReference>
<dbReference type="GO" id="GO:0005615">
    <property type="term" value="C:extracellular space"/>
    <property type="evidence" value="ECO:0000314"/>
    <property type="project" value="UniProtKB"/>
</dbReference>
<dbReference type="GO" id="GO:0042581">
    <property type="term" value="C:specific granule"/>
    <property type="evidence" value="ECO:0000314"/>
    <property type="project" value="UniProtKB"/>
</dbReference>
<dbReference type="GO" id="GO:0035580">
    <property type="term" value="C:specific granule lumen"/>
    <property type="evidence" value="ECO:0000304"/>
    <property type="project" value="Reactome"/>
</dbReference>
<dbReference type="GO" id="GO:1904724">
    <property type="term" value="C:tertiary granule lumen"/>
    <property type="evidence" value="ECO:0000304"/>
    <property type="project" value="Reactome"/>
</dbReference>
<dbReference type="GO" id="GO:0001530">
    <property type="term" value="F:lipopolysaccharide binding"/>
    <property type="evidence" value="ECO:0000318"/>
    <property type="project" value="GO_Central"/>
</dbReference>
<dbReference type="GO" id="GO:1990000">
    <property type="term" value="P:amyloid fibril formation"/>
    <property type="evidence" value="ECO:0000314"/>
    <property type="project" value="DisProt"/>
</dbReference>
<dbReference type="GO" id="GO:0019731">
    <property type="term" value="P:antibacterial humoral response"/>
    <property type="evidence" value="ECO:0000314"/>
    <property type="project" value="UniProtKB"/>
</dbReference>
<dbReference type="GO" id="GO:0061844">
    <property type="term" value="P:antimicrobial humoral immune response mediated by antimicrobial peptide"/>
    <property type="evidence" value="ECO:0000314"/>
    <property type="project" value="UniProtKB"/>
</dbReference>
<dbReference type="GO" id="GO:0071347">
    <property type="term" value="P:cellular response to interleukin-1"/>
    <property type="evidence" value="ECO:0007669"/>
    <property type="project" value="Ensembl"/>
</dbReference>
<dbReference type="GO" id="GO:0071354">
    <property type="term" value="P:cellular response to interleukin-6"/>
    <property type="evidence" value="ECO:0007669"/>
    <property type="project" value="Ensembl"/>
</dbReference>
<dbReference type="GO" id="GO:0071222">
    <property type="term" value="P:cellular response to lipopolysaccharide"/>
    <property type="evidence" value="ECO:0007669"/>
    <property type="project" value="Ensembl"/>
</dbReference>
<dbReference type="GO" id="GO:0071224">
    <property type="term" value="P:cellular response to peptidoglycan"/>
    <property type="evidence" value="ECO:0007669"/>
    <property type="project" value="Ensembl"/>
</dbReference>
<dbReference type="GO" id="GO:0071356">
    <property type="term" value="P:cellular response to tumor necrosis factor"/>
    <property type="evidence" value="ECO:0007669"/>
    <property type="project" value="Ensembl"/>
</dbReference>
<dbReference type="GO" id="GO:0019835">
    <property type="term" value="P:cytolysis"/>
    <property type="evidence" value="ECO:0000269"/>
    <property type="project" value="DisProt"/>
</dbReference>
<dbReference type="GO" id="GO:0042742">
    <property type="term" value="P:defense response to bacterium"/>
    <property type="evidence" value="ECO:0000315"/>
    <property type="project" value="MGI"/>
</dbReference>
<dbReference type="GO" id="GO:0050829">
    <property type="term" value="P:defense response to Gram-negative bacterium"/>
    <property type="evidence" value="ECO:0000318"/>
    <property type="project" value="GO_Central"/>
</dbReference>
<dbReference type="GO" id="GO:0050830">
    <property type="term" value="P:defense response to Gram-positive bacterium"/>
    <property type="evidence" value="ECO:0000314"/>
    <property type="project" value="UniProtKB"/>
</dbReference>
<dbReference type="GO" id="GO:0045087">
    <property type="term" value="P:innate immune response"/>
    <property type="evidence" value="ECO:0000318"/>
    <property type="project" value="GO_Central"/>
</dbReference>
<dbReference type="GO" id="GO:0002227">
    <property type="term" value="P:innate immune response in mucosa"/>
    <property type="evidence" value="ECO:0000314"/>
    <property type="project" value="UniProtKB"/>
</dbReference>
<dbReference type="GO" id="GO:0051873">
    <property type="term" value="P:killing by host of symbiont cells"/>
    <property type="evidence" value="ECO:0000314"/>
    <property type="project" value="CACAO"/>
</dbReference>
<dbReference type="GO" id="GO:0042119">
    <property type="term" value="P:neutrophil activation"/>
    <property type="evidence" value="ECO:0000314"/>
    <property type="project" value="UniProtKB"/>
</dbReference>
<dbReference type="GO" id="GO:0045766">
    <property type="term" value="P:positive regulation of angiogenesis"/>
    <property type="evidence" value="ECO:0007669"/>
    <property type="project" value="Ensembl"/>
</dbReference>
<dbReference type="GO" id="GO:0008284">
    <property type="term" value="P:positive regulation of cell population proliferation"/>
    <property type="evidence" value="ECO:0007669"/>
    <property type="project" value="Ensembl"/>
</dbReference>
<dbReference type="DisProt" id="DP00004"/>
<dbReference type="FunFam" id="3.10.450.10:FF:000003">
    <property type="entry name" value="Cathelicidin antimicrobial peptide"/>
    <property type="match status" value="1"/>
</dbReference>
<dbReference type="Gene3D" id="3.10.450.10">
    <property type="match status" value="1"/>
</dbReference>
<dbReference type="InterPro" id="IPR001894">
    <property type="entry name" value="Cathelicidin-like"/>
</dbReference>
<dbReference type="InterPro" id="IPR018216">
    <property type="entry name" value="Cathelicidin_CS"/>
</dbReference>
<dbReference type="InterPro" id="IPR022746">
    <property type="entry name" value="Cathlecidin_C"/>
</dbReference>
<dbReference type="InterPro" id="IPR046350">
    <property type="entry name" value="Cystatin_sf"/>
</dbReference>
<dbReference type="PANTHER" id="PTHR10206">
    <property type="entry name" value="CATHELICIDIN"/>
    <property type="match status" value="1"/>
</dbReference>
<dbReference type="PANTHER" id="PTHR10206:SF2">
    <property type="entry name" value="CATHELICIDIN ANTIMICROBIAL PEPTIDE"/>
    <property type="match status" value="1"/>
</dbReference>
<dbReference type="Pfam" id="PF12153">
    <property type="entry name" value="CAP18_C"/>
    <property type="match status" value="1"/>
</dbReference>
<dbReference type="Pfam" id="PF00666">
    <property type="entry name" value="Cathelicidins"/>
    <property type="match status" value="1"/>
</dbReference>
<dbReference type="SUPFAM" id="SSF54403">
    <property type="entry name" value="Cystatin/monellin"/>
    <property type="match status" value="1"/>
</dbReference>
<dbReference type="PROSITE" id="PS00946">
    <property type="entry name" value="CATHELICIDINS_1"/>
    <property type="match status" value="1"/>
</dbReference>
<dbReference type="PROSITE" id="PS00947">
    <property type="entry name" value="CATHELICIDINS_2"/>
    <property type="match status" value="1"/>
</dbReference>